<evidence type="ECO:0000250" key="1">
    <source>
        <dbReference type="UniProtKB" id="P68363"/>
    </source>
</evidence>
<evidence type="ECO:0000305" key="2"/>
<comment type="function">
    <text>Tubulin is the major constituent of microtubules, a cylinder consisting of laterally associated linear protofilaments composed of alpha- and beta-tubulin heterodimers. Microtubules grow by the addition of GTP-tubulin dimers to the microtubule end, where a stabilizing cap forms. Below the cap, tubulin dimers are in GDP-bound state, owing to GTPase activity of alpha-tubulin.</text>
</comment>
<comment type="catalytic activity">
    <reaction evidence="1">
        <text>GTP + H2O = GDP + phosphate + H(+)</text>
        <dbReference type="Rhea" id="RHEA:19669"/>
        <dbReference type="ChEBI" id="CHEBI:15377"/>
        <dbReference type="ChEBI" id="CHEBI:15378"/>
        <dbReference type="ChEBI" id="CHEBI:37565"/>
        <dbReference type="ChEBI" id="CHEBI:43474"/>
        <dbReference type="ChEBI" id="CHEBI:58189"/>
    </reaction>
    <physiologicalReaction direction="left-to-right" evidence="1">
        <dbReference type="Rhea" id="RHEA:19670"/>
    </physiologicalReaction>
</comment>
<comment type="cofactor">
    <cofactor evidence="1">
        <name>Mg(2+)</name>
        <dbReference type="ChEBI" id="CHEBI:18420"/>
    </cofactor>
</comment>
<comment type="subunit">
    <text>Dimer of alpha and beta chains. A typical microtubule is a hollow water-filled tube with an outer diameter of 25 nm and an inner diameter of 15 nM. Alpha-beta heterodimers associate head-to-tail to form protofilaments running lengthwise along the microtubule wall with the beta-tubulin subunit facing the microtubule plus end conferring a structural polarity. Microtubules usually have 13 protofilaments but different protofilament numbers can be found in some organisms and specialized cells.</text>
</comment>
<comment type="subcellular location">
    <subcellularLocation>
        <location>Cytoplasm</location>
        <location>Cytoskeleton</location>
    </subcellularLocation>
</comment>
<comment type="similarity">
    <text evidence="2">Belongs to the tubulin family.</text>
</comment>
<reference key="1">
    <citation type="journal article" date="1993" name="Naturwissenschaften">
        <title>Blepharisma uses UAA as a termination codon.</title>
        <authorList>
            <person name="Liang A."/>
            <person name="Heckmann K."/>
        </authorList>
    </citation>
    <scope>NUCLEOTIDE SEQUENCE [MRNA]</scope>
</reference>
<name>TBA_BLEJA</name>
<accession>Q08628</accession>
<protein>
    <recommendedName>
        <fullName>Tubulin alpha chain</fullName>
        <ecNumber evidence="1">3.6.5.-</ecNumber>
    </recommendedName>
</protein>
<keyword id="KW-0963">Cytoplasm</keyword>
<keyword id="KW-0206">Cytoskeleton</keyword>
<keyword id="KW-0342">GTP-binding</keyword>
<keyword id="KW-0378">Hydrolase</keyword>
<keyword id="KW-0493">Microtubule</keyword>
<keyword id="KW-0547">Nucleotide-binding</keyword>
<organism>
    <name type="scientific">Blepharisma japonicum</name>
    <dbReference type="NCBI Taxonomy" id="5961"/>
    <lineage>
        <taxon>Eukaryota</taxon>
        <taxon>Sar</taxon>
        <taxon>Alveolata</taxon>
        <taxon>Ciliophora</taxon>
        <taxon>Postciliodesmatophora</taxon>
        <taxon>Heterotrichea</taxon>
        <taxon>Heterotrichida</taxon>
        <taxon>Blepharismidae</taxon>
        <taxon>Blepharisma</taxon>
    </lineage>
</organism>
<sequence>FVHWYVGEGMEEGEFSEAREDLAALEKDYEEVGIETAEAEGEEEGYGEEL</sequence>
<proteinExistence type="evidence at transcript level"/>
<dbReference type="EC" id="3.6.5.-" evidence="1"/>
<dbReference type="EMBL" id="S62518">
    <property type="protein sequence ID" value="AAB27144.1"/>
    <property type="molecule type" value="mRNA"/>
</dbReference>
<dbReference type="PIR" id="S36687">
    <property type="entry name" value="S36687"/>
</dbReference>
<dbReference type="SMR" id="Q08628"/>
<dbReference type="GO" id="GO:0005737">
    <property type="term" value="C:cytoplasm"/>
    <property type="evidence" value="ECO:0007669"/>
    <property type="project" value="UniProtKB-KW"/>
</dbReference>
<dbReference type="GO" id="GO:0005874">
    <property type="term" value="C:microtubule"/>
    <property type="evidence" value="ECO:0007669"/>
    <property type="project" value="UniProtKB-KW"/>
</dbReference>
<dbReference type="GO" id="GO:0005525">
    <property type="term" value="F:GTP binding"/>
    <property type="evidence" value="ECO:0007669"/>
    <property type="project" value="UniProtKB-KW"/>
</dbReference>
<dbReference type="GO" id="GO:0016787">
    <property type="term" value="F:hydrolase activity"/>
    <property type="evidence" value="ECO:0007669"/>
    <property type="project" value="UniProtKB-KW"/>
</dbReference>
<dbReference type="GO" id="GO:0007017">
    <property type="term" value="P:microtubule-based process"/>
    <property type="evidence" value="ECO:0007669"/>
    <property type="project" value="InterPro"/>
</dbReference>
<dbReference type="Gene3D" id="1.10.287.600">
    <property type="entry name" value="Helix hairpin bin"/>
    <property type="match status" value="1"/>
</dbReference>
<dbReference type="InterPro" id="IPR008280">
    <property type="entry name" value="Tub_FtsZ_C"/>
</dbReference>
<dbReference type="InterPro" id="IPR000217">
    <property type="entry name" value="Tubulin"/>
</dbReference>
<dbReference type="InterPro" id="IPR023123">
    <property type="entry name" value="Tubulin_C"/>
</dbReference>
<dbReference type="PANTHER" id="PTHR11588">
    <property type="entry name" value="TUBULIN"/>
    <property type="match status" value="1"/>
</dbReference>
<dbReference type="SUPFAM" id="SSF55307">
    <property type="entry name" value="Tubulin C-terminal domain-like"/>
    <property type="match status" value="1"/>
</dbReference>
<feature type="chain" id="PRO_0000048142" description="Tubulin alpha chain">
    <location>
        <begin position="1" status="less than"/>
        <end position="50"/>
    </location>
</feature>
<feature type="non-terminal residue">
    <location>
        <position position="1"/>
    </location>
</feature>